<evidence type="ECO:0000250" key="1"/>
<evidence type="ECO:0000255" key="2"/>
<evidence type="ECO:0000255" key="3">
    <source>
        <dbReference type="HAMAP-Rule" id="MF_00324"/>
    </source>
</evidence>
<evidence type="ECO:0000256" key="4">
    <source>
        <dbReference type="SAM" id="MobiDB-lite"/>
    </source>
</evidence>
<evidence type="ECO:0000305" key="5"/>
<protein>
    <recommendedName>
        <fullName>DNA polymerase II large subunit</fullName>
        <shortName>Pol II</shortName>
        <ecNumber evidence="3">2.7.7.7</ecNumber>
    </recommendedName>
    <alternativeName>
        <fullName evidence="3">Exodeoxyribonuclease large subunit</fullName>
        <ecNumber evidence="3">3.1.11.1</ecNumber>
    </alternativeName>
    <component>
        <recommendedName>
            <fullName>Hsp-NRC1 polC intein</fullName>
        </recommendedName>
        <alternativeName>
            <fullName>Hsp-NRC1 pol2 intein</fullName>
        </alternativeName>
    </component>
</protein>
<keyword id="KW-0068">Autocatalytic cleavage</keyword>
<keyword id="KW-0235">DNA replication</keyword>
<keyword id="KW-0238">DNA-binding</keyword>
<keyword id="KW-0239">DNA-directed DNA polymerase</keyword>
<keyword id="KW-0269">Exonuclease</keyword>
<keyword id="KW-0378">Hydrolase</keyword>
<keyword id="KW-0511">Multifunctional enzyme</keyword>
<keyword id="KW-0540">Nuclease</keyword>
<keyword id="KW-0548">Nucleotidyltransferase</keyword>
<keyword id="KW-0651">Protein splicing</keyword>
<keyword id="KW-1185">Reference proteome</keyword>
<keyword id="KW-0808">Transferase</keyword>
<proteinExistence type="inferred from homology"/>
<sequence length="1370" mass="150296">MRPTDETYFETLETGLDDAFEVAEAARERGEDPTPNVEIPVAKDMADRVENILGIDGVAERVRDLDGEMSREEAALELVADFVDGRVGDYDTDAGKIEGAVRTAVALLTEGVVAAPIEGIDRVEVNDNDDGTQYVAVYYAGPIRSAGGTAQALSVLVADYARAMLGIDAFKPRDDEIERYAEEVDLYDSETGLQYSPKDAETTFITEHCPVMLDGEATGNEEVDGFRDLERIDTNSPRGGMCLVLAEGIALKAPKIQRYTRNLDEVAWPWLQDLIDGTIGADDADEDTPDAGSDSDATDEGDAPSASTDAEEPPRAAPSDKFLRDLIAGRPVFGHPSKNGGFRLRYGRARNHGNATAGVHPATMHLLDDFLATGTQIKTERPGKAAGIVPVDSIEGPTVKLANGDVRHINDPADALDVRNGVAEILDVGEYLVNYGEFVENNHELAPASYAPEWWIQDLDAAGADVQALRDSPYVDLTAPTADQAMAWATDYDAPLHPAYTYLWHDIDVEQFRALADAVADAHTDASDDDDRGVLVLDHTTTVRETLEALLVTHHQGDDTIRVDDWLPLARSLGVTESLDREWETLSEAAAEWPNAVRAVNEVAPFSVQERAPTRIGNRMGRPEKSESRDLSPAVHTLFPIGDAGGSQRDVADAARYAPDMSDTPGEIPVRVGDRVCPSCDEHTYESRCPDCGDWTDPHYECRDCGAVATPDESGRVECPNCGRDLDNVTTQVIDINDEYHGALRAVGERENAFDQLKGVKGLLSAEKTPEPMAKGVLRAKHDVTAFKDGTVRYDMTDLPVTAVTPAELDVTAGQFRELGYNQDIHGDPLEHDDQLVELRVQDVVLSDGAADHMLKTADFVDDLLTQYYGLDAFYDLDDRDDLVGELVFGMAPHTSAAVVGRVAGFTSASVGYAHPYFHAAKRRNCFHPETNVWFRDESGEWHHDPIETLVEARLDPDTADEDDFGALVQALDGDVFVPSVTEDGEETLQRVEAVSKHPAPDHLLAVETKRGRELTVTPDHSMRRWTGDGIERVDARELTAGDALPAPTQVPGDGETATSELRSESLDGTHPQRRFGDGGSVRTDEVVSVEPVRSSVDHTYSLTVAETNTLVANGLFTGQCDGDEDCVMLLMDGLINFSKSYLPDKRGGRMDAPLVMSSRIDPAEIDDEAHNIDIDREYPREFYEATRELADPEDVADLITLAESTVGTDEEYTGFGHTHATSNIHLGPSLSAYKTLGSMMDKMDAQLELARKLRSVAETDVAERVIEYHFLPDLIGNLRAFSRQETRCLDCGEKYRRMPLSGDCRECGGRVNLTVHEGSVNKYMDTAMRVATEYDCREYTKQRLEIMDRRLESVFEDDTNKQSGISDFM</sequence>
<accession>Q9HMX8</accession>
<feature type="chain" id="PRO_0000007301" description="DNA polymerase II large subunit, 1st part" evidence="2">
    <location>
        <begin position="1"/>
        <end position="925"/>
    </location>
</feature>
<feature type="chain" id="PRO_0000007302" description="Hsp-NRC1 polC intein" evidence="2">
    <location>
        <begin position="926"/>
        <end position="1120"/>
    </location>
</feature>
<feature type="chain" id="PRO_0000007303" description="DNA polymerase II large subunit, 2nd part" evidence="2">
    <location>
        <begin position="1121"/>
        <end position="1370"/>
    </location>
</feature>
<feature type="region of interest" description="Disordered" evidence="4">
    <location>
        <begin position="279"/>
        <end position="317"/>
    </location>
</feature>
<feature type="region of interest" description="Disordered" evidence="4">
    <location>
        <begin position="1041"/>
        <end position="1081"/>
    </location>
</feature>
<dbReference type="EC" id="2.7.7.7" evidence="3"/>
<dbReference type="EC" id="3.1.11.1" evidence="3"/>
<dbReference type="EMBL" id="AE004437">
    <property type="protein sequence ID" value="AAG20443.1"/>
    <property type="molecule type" value="Genomic_DNA"/>
</dbReference>
<dbReference type="PIR" id="G84384">
    <property type="entry name" value="G84384"/>
</dbReference>
<dbReference type="RefSeq" id="WP_010903745.1">
    <property type="nucleotide sequence ID" value="NC_002607.1"/>
</dbReference>
<dbReference type="SMR" id="Q9HMX8"/>
<dbReference type="FunCoup" id="Q9HMX8">
    <property type="interactions" value="18"/>
</dbReference>
<dbReference type="STRING" id="64091.VNG_2338G"/>
<dbReference type="MEROPS" id="N10.006"/>
<dbReference type="PaxDb" id="64091-VNG_2338G"/>
<dbReference type="KEGG" id="hal:VNG_2338G"/>
<dbReference type="PATRIC" id="fig|64091.14.peg.1810"/>
<dbReference type="HOGENOM" id="CLU_001154_0_0_2"/>
<dbReference type="InParanoid" id="Q9HMX8"/>
<dbReference type="OrthoDB" id="7529at2157"/>
<dbReference type="PhylomeDB" id="Q9HMX8"/>
<dbReference type="Proteomes" id="UP000000554">
    <property type="component" value="Chromosome"/>
</dbReference>
<dbReference type="GO" id="GO:0003677">
    <property type="term" value="F:DNA binding"/>
    <property type="evidence" value="ECO:0007669"/>
    <property type="project" value="UniProtKB-UniRule"/>
</dbReference>
<dbReference type="GO" id="GO:0003887">
    <property type="term" value="F:DNA-directed DNA polymerase activity"/>
    <property type="evidence" value="ECO:0007669"/>
    <property type="project" value="UniProtKB-UniRule"/>
</dbReference>
<dbReference type="GO" id="GO:0008310">
    <property type="term" value="F:single-stranded DNA 3'-5' DNA exonuclease activity"/>
    <property type="evidence" value="ECO:0007669"/>
    <property type="project" value="UniProtKB-EC"/>
</dbReference>
<dbReference type="GO" id="GO:0006308">
    <property type="term" value="P:DNA catabolic process"/>
    <property type="evidence" value="ECO:0007669"/>
    <property type="project" value="UniProtKB-UniRule"/>
</dbReference>
<dbReference type="GO" id="GO:0006261">
    <property type="term" value="P:DNA-templated DNA replication"/>
    <property type="evidence" value="ECO:0007669"/>
    <property type="project" value="UniProtKB-UniRule"/>
</dbReference>
<dbReference type="GO" id="GO:0016539">
    <property type="term" value="P:intein-mediated protein splicing"/>
    <property type="evidence" value="ECO:0007669"/>
    <property type="project" value="InterPro"/>
</dbReference>
<dbReference type="CDD" id="cd00081">
    <property type="entry name" value="Hint"/>
    <property type="match status" value="1"/>
</dbReference>
<dbReference type="Gene3D" id="2.170.16.10">
    <property type="entry name" value="Hedgehog/Intein (Hint) domain"/>
    <property type="match status" value="1"/>
</dbReference>
<dbReference type="HAMAP" id="MF_00324">
    <property type="entry name" value="DNApol_II_L_arch"/>
    <property type="match status" value="1"/>
</dbReference>
<dbReference type="InterPro" id="IPR003586">
    <property type="entry name" value="Hint_dom_C"/>
</dbReference>
<dbReference type="InterPro" id="IPR003587">
    <property type="entry name" value="Hint_dom_N"/>
</dbReference>
<dbReference type="InterPro" id="IPR036844">
    <property type="entry name" value="Hint_dom_sf"/>
</dbReference>
<dbReference type="InterPro" id="IPR030934">
    <property type="entry name" value="Intein_C"/>
</dbReference>
<dbReference type="InterPro" id="IPR006141">
    <property type="entry name" value="Intein_N"/>
</dbReference>
<dbReference type="InterPro" id="IPR004475">
    <property type="entry name" value="PolC_DP2"/>
</dbReference>
<dbReference type="InterPro" id="IPR056172">
    <property type="entry name" value="PolC_DP2_cat_dom"/>
</dbReference>
<dbReference type="InterPro" id="IPR056171">
    <property type="entry name" value="PolC_DP2_central_dom"/>
</dbReference>
<dbReference type="InterPro" id="IPR016033">
    <property type="entry name" value="PolC_DP2_N"/>
</dbReference>
<dbReference type="NCBIfam" id="TIGR01443">
    <property type="entry name" value="intein_Cterm"/>
    <property type="match status" value="1"/>
</dbReference>
<dbReference type="NCBIfam" id="TIGR01445">
    <property type="entry name" value="intein_Nterm"/>
    <property type="match status" value="1"/>
</dbReference>
<dbReference type="NCBIfam" id="TIGR00354">
    <property type="entry name" value="polC"/>
    <property type="match status" value="1"/>
</dbReference>
<dbReference type="NCBIfam" id="NF011302">
    <property type="entry name" value="PRK14714.1"/>
    <property type="match status" value="1"/>
</dbReference>
<dbReference type="PANTHER" id="PTHR42210">
    <property type="entry name" value="DNA POLYMERASE II LARGE SUBUNIT"/>
    <property type="match status" value="1"/>
</dbReference>
<dbReference type="PANTHER" id="PTHR42210:SF1">
    <property type="entry name" value="DNA POLYMERASE II LARGE SUBUNIT"/>
    <property type="match status" value="1"/>
</dbReference>
<dbReference type="Pfam" id="PF24846">
    <property type="entry name" value="PolC_DP2_cat"/>
    <property type="match status" value="2"/>
</dbReference>
<dbReference type="Pfam" id="PF24844">
    <property type="entry name" value="PolC_DP2_central"/>
    <property type="match status" value="1"/>
</dbReference>
<dbReference type="Pfam" id="PF03833">
    <property type="entry name" value="PolC_DP2_N"/>
    <property type="match status" value="1"/>
</dbReference>
<dbReference type="SMART" id="SM00305">
    <property type="entry name" value="HintC"/>
    <property type="match status" value="1"/>
</dbReference>
<dbReference type="SMART" id="SM00306">
    <property type="entry name" value="HintN"/>
    <property type="match status" value="1"/>
</dbReference>
<dbReference type="SUPFAM" id="SSF51294">
    <property type="entry name" value="Hedgehog/intein (Hint) domain"/>
    <property type="match status" value="1"/>
</dbReference>
<dbReference type="PROSITE" id="PS50817">
    <property type="entry name" value="INTEIN_N_TER"/>
    <property type="match status" value="1"/>
</dbReference>
<organism>
    <name type="scientific">Halobacterium salinarum (strain ATCC 700922 / JCM 11081 / NRC-1)</name>
    <name type="common">Halobacterium halobium</name>
    <dbReference type="NCBI Taxonomy" id="64091"/>
    <lineage>
        <taxon>Archaea</taxon>
        <taxon>Methanobacteriati</taxon>
        <taxon>Methanobacteriota</taxon>
        <taxon>Stenosarchaea group</taxon>
        <taxon>Halobacteria</taxon>
        <taxon>Halobacteriales</taxon>
        <taxon>Halobacteriaceae</taxon>
        <taxon>Halobacterium</taxon>
        <taxon>Halobacterium salinarum NRC-34001</taxon>
    </lineage>
</organism>
<name>DP2L_HALSA</name>
<reference key="1">
    <citation type="journal article" date="2000" name="Proc. Natl. Acad. Sci. U.S.A.">
        <title>Genome sequence of Halobacterium species NRC-1.</title>
        <authorList>
            <person name="Ng W.V."/>
            <person name="Kennedy S.P."/>
            <person name="Mahairas G.G."/>
            <person name="Berquist B."/>
            <person name="Pan M."/>
            <person name="Shukla H.D."/>
            <person name="Lasky S.R."/>
            <person name="Baliga N.S."/>
            <person name="Thorsson V."/>
            <person name="Sbrogna J."/>
            <person name="Swartzell S."/>
            <person name="Weir D."/>
            <person name="Hall J."/>
            <person name="Dahl T.A."/>
            <person name="Welti R."/>
            <person name="Goo Y.A."/>
            <person name="Leithauser B."/>
            <person name="Keller K."/>
            <person name="Cruz R."/>
            <person name="Danson M.J."/>
            <person name="Hough D.W."/>
            <person name="Maddocks D.G."/>
            <person name="Jablonski P.E."/>
            <person name="Krebs M.P."/>
            <person name="Angevine C.M."/>
            <person name="Dale H."/>
            <person name="Isenbarger T.A."/>
            <person name="Peck R.F."/>
            <person name="Pohlschroder M."/>
            <person name="Spudich J.L."/>
            <person name="Jung K.-H."/>
            <person name="Alam M."/>
            <person name="Freitas T."/>
            <person name="Hou S."/>
            <person name="Daniels C.J."/>
            <person name="Dennis P.P."/>
            <person name="Omer A.D."/>
            <person name="Ebhardt H."/>
            <person name="Lowe T.M."/>
            <person name="Liang P."/>
            <person name="Riley M."/>
            <person name="Hood L."/>
            <person name="DasSarma S."/>
        </authorList>
    </citation>
    <scope>NUCLEOTIDE SEQUENCE [LARGE SCALE GENOMIC DNA]</scope>
    <source>
        <strain>ATCC 700922 / JCM 11081 / NRC-1</strain>
    </source>
</reference>
<comment type="function">
    <text evidence="1">Possesses two activities: a DNA synthesis (polymerase) and an exonucleolytic activity that degrades single-stranded DNA in the 3'- to 5'-direction. Has a template-primer preference which is characteristic of a replicative DNA polymerase (By similarity).</text>
</comment>
<comment type="catalytic activity">
    <reaction>
        <text>DNA(n) + a 2'-deoxyribonucleoside 5'-triphosphate = DNA(n+1) + diphosphate</text>
        <dbReference type="Rhea" id="RHEA:22508"/>
        <dbReference type="Rhea" id="RHEA-COMP:17339"/>
        <dbReference type="Rhea" id="RHEA-COMP:17340"/>
        <dbReference type="ChEBI" id="CHEBI:33019"/>
        <dbReference type="ChEBI" id="CHEBI:61560"/>
        <dbReference type="ChEBI" id="CHEBI:173112"/>
        <dbReference type="EC" id="2.7.7.7"/>
    </reaction>
</comment>
<comment type="catalytic activity">
    <reaction evidence="3">
        <text>Exonucleolytic cleavage in the 3'- to 5'-direction to yield nucleoside 5'-phosphates.</text>
        <dbReference type="EC" id="3.1.11.1"/>
    </reaction>
</comment>
<comment type="subunit">
    <text evidence="1">Heterodimer of a large subunit and a small subunit.</text>
</comment>
<comment type="PTM">
    <text evidence="5">This protein undergoes a protein self splicing that involves a post-translational excision of the intervening region (intein) followed by peptide ligation.</text>
</comment>
<comment type="similarity">
    <text evidence="5">Belongs to the archaeal DNA polymerase II family.</text>
</comment>
<gene>
    <name type="primary">polC</name>
    <name type="synonym">polA2</name>
    <name type="ordered locus">VNG_2338G</name>
</gene>